<evidence type="ECO:0000255" key="1">
    <source>
        <dbReference type="HAMAP-Rule" id="MF_01550"/>
    </source>
</evidence>
<proteinExistence type="inferred from homology"/>
<sequence length="498" mass="55934">MMLSSTSLYAAIDLGSNSFHMLVVREVAGSIQTLARIKRKVRLAAGLDTQNHLSQEAMERGWQCLKLFSERLQDIPLDQIRVVATATLRLASNAEEFLQTATEILGCPIQVISGEEEARLIYHGVAHTTGGPEQRLVVDIGGGSTELVTGNGAQANILVSLPMGCVTWLERYFSDRNLAKDNFDRSESAAREMLKPVAQRFREHGWQICVGASGTVQALQEIMVAQGMDELITLAKLQQLKQRAIQCGKLEELEIPGLTLERALVFPSGLSILIAIFQELAIESMTLAGGALREGLVYGMLHLPVEQDIRSRTVRNIQRRYLLDTEQAKRVSKLADNFLLQVEKEWRLDSRCRELLQNACLIHEIGLSIDFKRAPQHAAYLIRNLDLPGFTPAQKLLLAALLQNQSDTLDLSLLNQQNALPVDMAQHLCRLLRLAIIFSSRRRDDTLPAVRLRANGETLYVLLPHGWLQQHPYRAEALEQESHWQSYVQWPLLLEEFN</sequence>
<comment type="function">
    <text evidence="1">Catalyzes the conversion of pppGpp to ppGpp. Guanosine pentaphosphate (pppGpp) is a cytoplasmic signaling molecule which together with ppGpp controls the 'stringent response', an adaptive process that allows bacteria to respond to amino acid starvation, resulting in the coordinated regulation of numerous cellular activities.</text>
</comment>
<comment type="catalytic activity">
    <reaction evidence="1">
        <text>guanosine 3'-diphosphate 5'-triphosphate + H2O = guanosine 3',5'-bis(diphosphate) + phosphate + H(+)</text>
        <dbReference type="Rhea" id="RHEA:13073"/>
        <dbReference type="ChEBI" id="CHEBI:15377"/>
        <dbReference type="ChEBI" id="CHEBI:15378"/>
        <dbReference type="ChEBI" id="CHEBI:43474"/>
        <dbReference type="ChEBI" id="CHEBI:77828"/>
        <dbReference type="ChEBI" id="CHEBI:142410"/>
        <dbReference type="EC" id="3.6.1.40"/>
    </reaction>
</comment>
<comment type="pathway">
    <text evidence="1">Purine metabolism; ppGpp biosynthesis; ppGpp from GTP: step 2/2.</text>
</comment>
<comment type="similarity">
    <text evidence="1">Belongs to the GppA/Ppx family. GppA subfamily.</text>
</comment>
<keyword id="KW-0378">Hydrolase</keyword>
<gene>
    <name evidence="1" type="primary">gppA</name>
    <name type="ordered locus">YE0165</name>
</gene>
<name>GPPA_YERE8</name>
<accession>A1JI66</accession>
<dbReference type="EC" id="3.6.1.40" evidence="1"/>
<dbReference type="EMBL" id="AM286415">
    <property type="protein sequence ID" value="CAL10304.1"/>
    <property type="molecule type" value="Genomic_DNA"/>
</dbReference>
<dbReference type="RefSeq" id="YP_001004556.1">
    <property type="nucleotide sequence ID" value="NC_008800.1"/>
</dbReference>
<dbReference type="SMR" id="A1JI66"/>
<dbReference type="KEGG" id="yen:YE0165"/>
<dbReference type="PATRIC" id="fig|393305.7.peg.256"/>
<dbReference type="eggNOG" id="COG0248">
    <property type="taxonomic scope" value="Bacteria"/>
</dbReference>
<dbReference type="HOGENOM" id="CLU_025908_4_0_6"/>
<dbReference type="OrthoDB" id="9793035at2"/>
<dbReference type="UniPathway" id="UPA00908">
    <property type="reaction ID" value="UER00885"/>
</dbReference>
<dbReference type="Proteomes" id="UP000000642">
    <property type="component" value="Chromosome"/>
</dbReference>
<dbReference type="GO" id="GO:0004309">
    <property type="term" value="F:exopolyphosphatase activity"/>
    <property type="evidence" value="ECO:0007669"/>
    <property type="project" value="InterPro"/>
</dbReference>
<dbReference type="GO" id="GO:0008894">
    <property type="term" value="F:guanosine-5'-triphosphate,3'-diphosphate diphosphatase activity"/>
    <property type="evidence" value="ECO:0007669"/>
    <property type="project" value="UniProtKB-UniRule"/>
</dbReference>
<dbReference type="GO" id="GO:0015974">
    <property type="term" value="P:guanosine pentaphosphate catabolic process"/>
    <property type="evidence" value="ECO:0007669"/>
    <property type="project" value="InterPro"/>
</dbReference>
<dbReference type="GO" id="GO:0015970">
    <property type="term" value="P:guanosine tetraphosphate biosynthetic process"/>
    <property type="evidence" value="ECO:0007669"/>
    <property type="project" value="UniProtKB-UniRule"/>
</dbReference>
<dbReference type="GO" id="GO:0015949">
    <property type="term" value="P:nucleobase-containing small molecule interconversion"/>
    <property type="evidence" value="ECO:0007669"/>
    <property type="project" value="TreeGrafter"/>
</dbReference>
<dbReference type="CDD" id="cd24117">
    <property type="entry name" value="ASKHA_NBD_EcGppA-like"/>
    <property type="match status" value="1"/>
</dbReference>
<dbReference type="FunFam" id="1.10.3210.10:FF:000004">
    <property type="entry name" value="Guanosine-5'-triphosphate,3'-diphosphate pyrophosphatase"/>
    <property type="match status" value="1"/>
</dbReference>
<dbReference type="FunFam" id="3.30.420.150:FF:000001">
    <property type="entry name" value="Guanosine-5'-triphosphate,3'-diphosphate pyrophosphatase"/>
    <property type="match status" value="1"/>
</dbReference>
<dbReference type="FunFam" id="3.30.420.40:FF:000023">
    <property type="entry name" value="Guanosine-5'-triphosphate,3'-diphosphate pyrophosphatase"/>
    <property type="match status" value="1"/>
</dbReference>
<dbReference type="Gene3D" id="3.30.420.40">
    <property type="match status" value="1"/>
</dbReference>
<dbReference type="Gene3D" id="3.30.420.150">
    <property type="entry name" value="Exopolyphosphatase. Domain 2"/>
    <property type="match status" value="1"/>
</dbReference>
<dbReference type="Gene3D" id="1.10.3210.10">
    <property type="entry name" value="Hypothetical protein af1432"/>
    <property type="match status" value="1"/>
</dbReference>
<dbReference type="HAMAP" id="MF_01550">
    <property type="entry name" value="GppA"/>
    <property type="match status" value="1"/>
</dbReference>
<dbReference type="InterPro" id="IPR043129">
    <property type="entry name" value="ATPase_NBD"/>
</dbReference>
<dbReference type="InterPro" id="IPR022371">
    <property type="entry name" value="Exopolyphosphatase"/>
</dbReference>
<dbReference type="InterPro" id="IPR050273">
    <property type="entry name" value="GppA/Ppx_hydrolase"/>
</dbReference>
<dbReference type="InterPro" id="IPR023709">
    <property type="entry name" value="Guo-5TP_3DP_PyrP"/>
</dbReference>
<dbReference type="InterPro" id="IPR048950">
    <property type="entry name" value="Ppx_GppA_C"/>
</dbReference>
<dbReference type="InterPro" id="IPR003695">
    <property type="entry name" value="Ppx_GppA_N"/>
</dbReference>
<dbReference type="InterPro" id="IPR030673">
    <property type="entry name" value="PyroPPase_GppA_Ppx"/>
</dbReference>
<dbReference type="NCBIfam" id="TIGR03706">
    <property type="entry name" value="exo_poly_only"/>
    <property type="match status" value="1"/>
</dbReference>
<dbReference type="NCBIfam" id="NF008260">
    <property type="entry name" value="PRK11031.1"/>
    <property type="match status" value="1"/>
</dbReference>
<dbReference type="PANTHER" id="PTHR30005">
    <property type="entry name" value="EXOPOLYPHOSPHATASE"/>
    <property type="match status" value="1"/>
</dbReference>
<dbReference type="PANTHER" id="PTHR30005:SF0">
    <property type="entry name" value="RETROGRADE REGULATION PROTEIN 2"/>
    <property type="match status" value="1"/>
</dbReference>
<dbReference type="Pfam" id="PF02541">
    <property type="entry name" value="Ppx-GppA"/>
    <property type="match status" value="1"/>
</dbReference>
<dbReference type="Pfam" id="PF21447">
    <property type="entry name" value="Ppx-GppA_III"/>
    <property type="match status" value="1"/>
</dbReference>
<dbReference type="PIRSF" id="PIRSF001267">
    <property type="entry name" value="Pyrophosphatase_GppA_Ppx"/>
    <property type="match status" value="1"/>
</dbReference>
<dbReference type="SUPFAM" id="SSF53067">
    <property type="entry name" value="Actin-like ATPase domain"/>
    <property type="match status" value="2"/>
</dbReference>
<dbReference type="SUPFAM" id="SSF109604">
    <property type="entry name" value="HD-domain/PDEase-like"/>
    <property type="match status" value="1"/>
</dbReference>
<organism>
    <name type="scientific">Yersinia enterocolitica serotype O:8 / biotype 1B (strain NCTC 13174 / 8081)</name>
    <dbReference type="NCBI Taxonomy" id="393305"/>
    <lineage>
        <taxon>Bacteria</taxon>
        <taxon>Pseudomonadati</taxon>
        <taxon>Pseudomonadota</taxon>
        <taxon>Gammaproteobacteria</taxon>
        <taxon>Enterobacterales</taxon>
        <taxon>Yersiniaceae</taxon>
        <taxon>Yersinia</taxon>
    </lineage>
</organism>
<protein>
    <recommendedName>
        <fullName evidence="1">Guanosine-5'-triphosphate,3'-diphosphate pyrophosphatase</fullName>
        <ecNumber evidence="1">3.6.1.40</ecNumber>
    </recommendedName>
    <alternativeName>
        <fullName evidence="1">Guanosine pentaphosphate phosphohydrolase</fullName>
    </alternativeName>
    <alternativeName>
        <fullName evidence="1">pppGpp-5'-phosphohydrolase</fullName>
    </alternativeName>
</protein>
<feature type="chain" id="PRO_0000314502" description="Guanosine-5'-triphosphate,3'-diphosphate pyrophosphatase">
    <location>
        <begin position="1"/>
        <end position="498"/>
    </location>
</feature>
<reference key="1">
    <citation type="journal article" date="2006" name="PLoS Genet.">
        <title>The complete genome sequence and comparative genome analysis of the high pathogenicity Yersinia enterocolitica strain 8081.</title>
        <authorList>
            <person name="Thomson N.R."/>
            <person name="Howard S."/>
            <person name="Wren B.W."/>
            <person name="Holden M.T.G."/>
            <person name="Crossman L."/>
            <person name="Challis G.L."/>
            <person name="Churcher C."/>
            <person name="Mungall K."/>
            <person name="Brooks K."/>
            <person name="Chillingworth T."/>
            <person name="Feltwell T."/>
            <person name="Abdellah Z."/>
            <person name="Hauser H."/>
            <person name="Jagels K."/>
            <person name="Maddison M."/>
            <person name="Moule S."/>
            <person name="Sanders M."/>
            <person name="Whitehead S."/>
            <person name="Quail M.A."/>
            <person name="Dougan G."/>
            <person name="Parkhill J."/>
            <person name="Prentice M.B."/>
        </authorList>
    </citation>
    <scope>NUCLEOTIDE SEQUENCE [LARGE SCALE GENOMIC DNA]</scope>
    <source>
        <strain>NCTC 13174 / 8081</strain>
    </source>
</reference>